<comment type="function">
    <text evidence="1">Involved in the de novo purine biosynthesis. Catalyzes the transfer of formate to 5-phospho-ribosyl-glycinamide (GAR), producing 5-phospho-ribosyl-N-formylglycinamide (FGAR). Formate is provided by PurU via hydrolysis of 10-formyl-tetrahydrofolate.</text>
</comment>
<comment type="catalytic activity">
    <reaction evidence="1">
        <text>N(1)-(5-phospho-beta-D-ribosyl)glycinamide + formate + ATP = N(2)-formyl-N(1)-(5-phospho-beta-D-ribosyl)glycinamide + ADP + phosphate + H(+)</text>
        <dbReference type="Rhea" id="RHEA:24829"/>
        <dbReference type="ChEBI" id="CHEBI:15378"/>
        <dbReference type="ChEBI" id="CHEBI:15740"/>
        <dbReference type="ChEBI" id="CHEBI:30616"/>
        <dbReference type="ChEBI" id="CHEBI:43474"/>
        <dbReference type="ChEBI" id="CHEBI:143788"/>
        <dbReference type="ChEBI" id="CHEBI:147286"/>
        <dbReference type="ChEBI" id="CHEBI:456216"/>
        <dbReference type="EC" id="6.3.1.21"/>
    </reaction>
    <physiologicalReaction direction="left-to-right" evidence="1">
        <dbReference type="Rhea" id="RHEA:24830"/>
    </physiologicalReaction>
</comment>
<comment type="pathway">
    <text evidence="1">Purine metabolism; IMP biosynthesis via de novo pathway; N(2)-formyl-N(1)-(5-phospho-D-ribosyl)glycinamide from N(1)-(5-phospho-D-ribosyl)glycinamide (formate route): step 1/1.</text>
</comment>
<comment type="subunit">
    <text evidence="1">Homodimer.</text>
</comment>
<comment type="similarity">
    <text evidence="1">Belongs to the PurK/PurT family.</text>
</comment>
<protein>
    <recommendedName>
        <fullName evidence="1">Formate-dependent phosphoribosylglycinamide formyltransferase</fullName>
        <ecNumber evidence="1">6.3.1.21</ecNumber>
    </recommendedName>
    <alternativeName>
        <fullName evidence="1">5'-phosphoribosylglycinamide transformylase 2</fullName>
    </alternativeName>
    <alternativeName>
        <fullName evidence="1">Formate-dependent GAR transformylase</fullName>
    </alternativeName>
    <alternativeName>
        <fullName evidence="1">GAR transformylase 2</fullName>
        <shortName evidence="1">GART 2</shortName>
    </alternativeName>
    <alternativeName>
        <fullName evidence="1">Non-folate glycinamide ribonucleotide transformylase</fullName>
    </alternativeName>
    <alternativeName>
        <fullName evidence="1">Phosphoribosylglycinamide formyltransferase 2</fullName>
    </alternativeName>
</protein>
<name>PURT_PSEAE</name>
<reference key="1">
    <citation type="journal article" date="2000" name="Nature">
        <title>Complete genome sequence of Pseudomonas aeruginosa PAO1, an opportunistic pathogen.</title>
        <authorList>
            <person name="Stover C.K."/>
            <person name="Pham X.-Q.T."/>
            <person name="Erwin A.L."/>
            <person name="Mizoguchi S.D."/>
            <person name="Warrener P."/>
            <person name="Hickey M.J."/>
            <person name="Brinkman F.S.L."/>
            <person name="Hufnagle W.O."/>
            <person name="Kowalik D.J."/>
            <person name="Lagrou M."/>
            <person name="Garber R.L."/>
            <person name="Goltry L."/>
            <person name="Tolentino E."/>
            <person name="Westbrock-Wadman S."/>
            <person name="Yuan Y."/>
            <person name="Brody L.L."/>
            <person name="Coulter S.N."/>
            <person name="Folger K.R."/>
            <person name="Kas A."/>
            <person name="Larbig K."/>
            <person name="Lim R.M."/>
            <person name="Smith K.A."/>
            <person name="Spencer D.H."/>
            <person name="Wong G.K.-S."/>
            <person name="Wu Z."/>
            <person name="Paulsen I.T."/>
            <person name="Reizer J."/>
            <person name="Saier M.H. Jr."/>
            <person name="Hancock R.E.W."/>
            <person name="Lory S."/>
            <person name="Olson M.V."/>
        </authorList>
    </citation>
    <scope>NUCLEOTIDE SEQUENCE [LARGE SCALE GENOMIC DNA]</scope>
    <source>
        <strain>ATCC 15692 / DSM 22644 / CIP 104116 / JCM 14847 / LMG 12228 / 1C / PRS 101 / PAO1</strain>
    </source>
</reference>
<feature type="chain" id="PRO_0000319208" description="Formate-dependent phosphoribosylglycinamide formyltransferase">
    <location>
        <begin position="1"/>
        <end position="393"/>
    </location>
</feature>
<feature type="domain" description="ATP-grasp" evidence="1">
    <location>
        <begin position="119"/>
        <end position="308"/>
    </location>
</feature>
<feature type="binding site" evidence="1">
    <location>
        <begin position="22"/>
        <end position="23"/>
    </location>
    <ligand>
        <name>N(1)-(5-phospho-beta-D-ribosyl)glycinamide</name>
        <dbReference type="ChEBI" id="CHEBI:143788"/>
    </ligand>
</feature>
<feature type="binding site" evidence="1">
    <location>
        <position position="82"/>
    </location>
    <ligand>
        <name>N(1)-(5-phospho-beta-D-ribosyl)glycinamide</name>
        <dbReference type="ChEBI" id="CHEBI:143788"/>
    </ligand>
</feature>
<feature type="binding site" evidence="1">
    <location>
        <position position="114"/>
    </location>
    <ligand>
        <name>ATP</name>
        <dbReference type="ChEBI" id="CHEBI:30616"/>
    </ligand>
</feature>
<feature type="binding site" evidence="1">
    <location>
        <position position="155"/>
    </location>
    <ligand>
        <name>ATP</name>
        <dbReference type="ChEBI" id="CHEBI:30616"/>
    </ligand>
</feature>
<feature type="binding site" evidence="1">
    <location>
        <begin position="160"/>
        <end position="165"/>
    </location>
    <ligand>
        <name>ATP</name>
        <dbReference type="ChEBI" id="CHEBI:30616"/>
    </ligand>
</feature>
<feature type="binding site" evidence="1">
    <location>
        <begin position="195"/>
        <end position="198"/>
    </location>
    <ligand>
        <name>ATP</name>
        <dbReference type="ChEBI" id="CHEBI:30616"/>
    </ligand>
</feature>
<feature type="binding site" evidence="1">
    <location>
        <position position="203"/>
    </location>
    <ligand>
        <name>ATP</name>
        <dbReference type="ChEBI" id="CHEBI:30616"/>
    </ligand>
</feature>
<feature type="binding site" evidence="1">
    <location>
        <position position="267"/>
    </location>
    <ligand>
        <name>Mg(2+)</name>
        <dbReference type="ChEBI" id="CHEBI:18420"/>
    </ligand>
</feature>
<feature type="binding site" evidence="1">
    <location>
        <position position="279"/>
    </location>
    <ligand>
        <name>Mg(2+)</name>
        <dbReference type="ChEBI" id="CHEBI:18420"/>
    </ligand>
</feature>
<feature type="binding site" evidence="1">
    <location>
        <position position="286"/>
    </location>
    <ligand>
        <name>N(1)-(5-phospho-beta-D-ribosyl)glycinamide</name>
        <dbReference type="ChEBI" id="CHEBI:143788"/>
    </ligand>
</feature>
<feature type="binding site" evidence="1">
    <location>
        <position position="356"/>
    </location>
    <ligand>
        <name>N(1)-(5-phospho-beta-D-ribosyl)glycinamide</name>
        <dbReference type="ChEBI" id="CHEBI:143788"/>
    </ligand>
</feature>
<feature type="binding site" evidence="1">
    <location>
        <begin position="363"/>
        <end position="364"/>
    </location>
    <ligand>
        <name>N(1)-(5-phospho-beta-D-ribosyl)glycinamide</name>
        <dbReference type="ChEBI" id="CHEBI:143788"/>
    </ligand>
</feature>
<accession>Q9HXP3</accession>
<evidence type="ECO:0000255" key="1">
    <source>
        <dbReference type="HAMAP-Rule" id="MF_01643"/>
    </source>
</evidence>
<sequence>MTRIGTPLSPSATRVLLCGSGELGKEVAIELQRLGCEVIAVDRYGNAPAMQVAHRSHVISMLDGAALRAVIEQEKPHYIVPEIEAIATATLVELEAEGYTVVPTARAAQLTMNREGIRRLAAEELGLPTSPYHFADTFEDYRRGVERVGYPCVVKPIMSSSGKGQSVLKGPDDLQAAWDYAQEGGRAGKGRVIVEGFIDFDYEITLLTVRHVDGTTFCAPIGHRQVKGDYHESWQPQAMSAQALAESERVARAVTEALGGRGLFGVELFVKGDQVWFSEVSPRPHDTGLVTLISQDLSEFALHARAILGLPIPVIRQLGPSASAVILVEGKSRQVAFANLGAALSEADTALRLFGKPEVDGQRRMGVALARDESIDAARAKATRAAQAVRVEL</sequence>
<proteinExistence type="inferred from homology"/>
<gene>
    <name evidence="1" type="primary">purT</name>
    <name type="ordered locus">PA3751</name>
</gene>
<keyword id="KW-0067">ATP-binding</keyword>
<keyword id="KW-0436">Ligase</keyword>
<keyword id="KW-0460">Magnesium</keyword>
<keyword id="KW-0479">Metal-binding</keyword>
<keyword id="KW-0547">Nucleotide-binding</keyword>
<keyword id="KW-0658">Purine biosynthesis</keyword>
<keyword id="KW-1185">Reference proteome</keyword>
<dbReference type="EC" id="6.3.1.21" evidence="1"/>
<dbReference type="EMBL" id="AE004091">
    <property type="protein sequence ID" value="AAG07138.1"/>
    <property type="molecule type" value="Genomic_DNA"/>
</dbReference>
<dbReference type="PIR" id="B83176">
    <property type="entry name" value="B83176"/>
</dbReference>
<dbReference type="RefSeq" id="NP_252440.1">
    <property type="nucleotide sequence ID" value="NC_002516.2"/>
</dbReference>
<dbReference type="RefSeq" id="WP_003092658.1">
    <property type="nucleotide sequence ID" value="NZ_QZGE01000001.1"/>
</dbReference>
<dbReference type="SMR" id="Q9HXP3"/>
<dbReference type="FunCoup" id="Q9HXP3">
    <property type="interactions" value="147"/>
</dbReference>
<dbReference type="STRING" id="208964.PA3751"/>
<dbReference type="PaxDb" id="208964-PA3751"/>
<dbReference type="GeneID" id="880455"/>
<dbReference type="KEGG" id="pae:PA3751"/>
<dbReference type="PATRIC" id="fig|208964.12.peg.3925"/>
<dbReference type="PseudoCAP" id="PA3751"/>
<dbReference type="HOGENOM" id="CLU_011534_1_3_6"/>
<dbReference type="InParanoid" id="Q9HXP3"/>
<dbReference type="OrthoDB" id="9804625at2"/>
<dbReference type="PhylomeDB" id="Q9HXP3"/>
<dbReference type="BioCyc" id="PAER208964:G1FZ6-3822-MONOMER"/>
<dbReference type="UniPathway" id="UPA00074">
    <property type="reaction ID" value="UER00127"/>
</dbReference>
<dbReference type="Proteomes" id="UP000002438">
    <property type="component" value="Chromosome"/>
</dbReference>
<dbReference type="GO" id="GO:0005829">
    <property type="term" value="C:cytosol"/>
    <property type="evidence" value="ECO:0000318"/>
    <property type="project" value="GO_Central"/>
</dbReference>
<dbReference type="GO" id="GO:0005524">
    <property type="term" value="F:ATP binding"/>
    <property type="evidence" value="ECO:0007669"/>
    <property type="project" value="UniProtKB-UniRule"/>
</dbReference>
<dbReference type="GO" id="GO:0000287">
    <property type="term" value="F:magnesium ion binding"/>
    <property type="evidence" value="ECO:0007669"/>
    <property type="project" value="InterPro"/>
</dbReference>
<dbReference type="GO" id="GO:0043815">
    <property type="term" value="F:phosphoribosylglycinamide formyltransferase 2 activity"/>
    <property type="evidence" value="ECO:0007669"/>
    <property type="project" value="UniProtKB-UniRule"/>
</dbReference>
<dbReference type="GO" id="GO:0004644">
    <property type="term" value="F:phosphoribosylglycinamide formyltransferase activity"/>
    <property type="evidence" value="ECO:0007669"/>
    <property type="project" value="InterPro"/>
</dbReference>
<dbReference type="GO" id="GO:0006189">
    <property type="term" value="P:'de novo' IMP biosynthetic process"/>
    <property type="evidence" value="ECO:0007669"/>
    <property type="project" value="UniProtKB-UniRule"/>
</dbReference>
<dbReference type="FunFam" id="3.30.1490.20:FF:000013">
    <property type="entry name" value="Formate-dependent phosphoribosylglycinamide formyltransferase"/>
    <property type="match status" value="1"/>
</dbReference>
<dbReference type="FunFam" id="3.30.470.20:FF:000027">
    <property type="entry name" value="Formate-dependent phosphoribosylglycinamide formyltransferase"/>
    <property type="match status" value="1"/>
</dbReference>
<dbReference type="FunFam" id="3.40.50.20:FF:000007">
    <property type="entry name" value="Formate-dependent phosphoribosylglycinamide formyltransferase"/>
    <property type="match status" value="1"/>
</dbReference>
<dbReference type="Gene3D" id="3.40.50.20">
    <property type="match status" value="1"/>
</dbReference>
<dbReference type="Gene3D" id="3.30.1490.20">
    <property type="entry name" value="ATP-grasp fold, A domain"/>
    <property type="match status" value="1"/>
</dbReference>
<dbReference type="Gene3D" id="3.30.470.20">
    <property type="entry name" value="ATP-grasp fold, B domain"/>
    <property type="match status" value="1"/>
</dbReference>
<dbReference type="HAMAP" id="MF_01643">
    <property type="entry name" value="PurT"/>
    <property type="match status" value="1"/>
</dbReference>
<dbReference type="InterPro" id="IPR011761">
    <property type="entry name" value="ATP-grasp"/>
</dbReference>
<dbReference type="InterPro" id="IPR003135">
    <property type="entry name" value="ATP-grasp_carboxylate-amine"/>
</dbReference>
<dbReference type="InterPro" id="IPR013815">
    <property type="entry name" value="ATP_grasp_subdomain_1"/>
</dbReference>
<dbReference type="InterPro" id="IPR016185">
    <property type="entry name" value="PreATP-grasp_dom_sf"/>
</dbReference>
<dbReference type="InterPro" id="IPR005862">
    <property type="entry name" value="PurT"/>
</dbReference>
<dbReference type="InterPro" id="IPR054350">
    <property type="entry name" value="PurT/PurK_preATP-grasp"/>
</dbReference>
<dbReference type="InterPro" id="IPR048740">
    <property type="entry name" value="PurT_C"/>
</dbReference>
<dbReference type="NCBIfam" id="NF006766">
    <property type="entry name" value="PRK09288.1"/>
    <property type="match status" value="1"/>
</dbReference>
<dbReference type="NCBIfam" id="TIGR01142">
    <property type="entry name" value="purT"/>
    <property type="match status" value="1"/>
</dbReference>
<dbReference type="PANTHER" id="PTHR43055">
    <property type="entry name" value="FORMATE-DEPENDENT PHOSPHORIBOSYLGLYCINAMIDE FORMYLTRANSFERASE"/>
    <property type="match status" value="1"/>
</dbReference>
<dbReference type="PANTHER" id="PTHR43055:SF1">
    <property type="entry name" value="FORMATE-DEPENDENT PHOSPHORIBOSYLGLYCINAMIDE FORMYLTRANSFERASE"/>
    <property type="match status" value="1"/>
</dbReference>
<dbReference type="Pfam" id="PF02222">
    <property type="entry name" value="ATP-grasp"/>
    <property type="match status" value="1"/>
</dbReference>
<dbReference type="Pfam" id="PF21244">
    <property type="entry name" value="PurT_C"/>
    <property type="match status" value="1"/>
</dbReference>
<dbReference type="Pfam" id="PF22660">
    <property type="entry name" value="RS_preATP-grasp-like"/>
    <property type="match status" value="1"/>
</dbReference>
<dbReference type="SUPFAM" id="SSF56059">
    <property type="entry name" value="Glutathione synthetase ATP-binding domain-like"/>
    <property type="match status" value="1"/>
</dbReference>
<dbReference type="SUPFAM" id="SSF52440">
    <property type="entry name" value="PreATP-grasp domain"/>
    <property type="match status" value="1"/>
</dbReference>
<dbReference type="PROSITE" id="PS50975">
    <property type="entry name" value="ATP_GRASP"/>
    <property type="match status" value="1"/>
</dbReference>
<organism>
    <name type="scientific">Pseudomonas aeruginosa (strain ATCC 15692 / DSM 22644 / CIP 104116 / JCM 14847 / LMG 12228 / 1C / PRS 101 / PAO1)</name>
    <dbReference type="NCBI Taxonomy" id="208964"/>
    <lineage>
        <taxon>Bacteria</taxon>
        <taxon>Pseudomonadati</taxon>
        <taxon>Pseudomonadota</taxon>
        <taxon>Gammaproteobacteria</taxon>
        <taxon>Pseudomonadales</taxon>
        <taxon>Pseudomonadaceae</taxon>
        <taxon>Pseudomonas</taxon>
    </lineage>
</organism>